<dbReference type="EC" id="3.5.4.16" evidence="1"/>
<dbReference type="EMBL" id="FM209186">
    <property type="protein sequence ID" value="CAW30689.1"/>
    <property type="molecule type" value="Genomic_DNA"/>
</dbReference>
<dbReference type="RefSeq" id="WP_003099665.1">
    <property type="nucleotide sequence ID" value="NC_011770.1"/>
</dbReference>
<dbReference type="SMR" id="B7V776"/>
<dbReference type="KEGG" id="pag:PLES_59351"/>
<dbReference type="HOGENOM" id="CLU_062816_0_0_6"/>
<dbReference type="UniPathway" id="UPA00848">
    <property type="reaction ID" value="UER00151"/>
</dbReference>
<dbReference type="GO" id="GO:0003934">
    <property type="term" value="F:GTP cyclohydrolase I activity"/>
    <property type="evidence" value="ECO:0007669"/>
    <property type="project" value="UniProtKB-UniRule"/>
</dbReference>
<dbReference type="GO" id="GO:0046654">
    <property type="term" value="P:tetrahydrofolate biosynthetic process"/>
    <property type="evidence" value="ECO:0007669"/>
    <property type="project" value="UniProtKB-UniRule"/>
</dbReference>
<dbReference type="Gene3D" id="3.10.270.10">
    <property type="entry name" value="Urate Oxidase"/>
    <property type="match status" value="1"/>
</dbReference>
<dbReference type="HAMAP" id="MF_01527_B">
    <property type="entry name" value="GTP_cyclohydrol_B"/>
    <property type="match status" value="1"/>
</dbReference>
<dbReference type="InterPro" id="IPR022838">
    <property type="entry name" value="GTP_cyclohydrolase_FolE2"/>
</dbReference>
<dbReference type="InterPro" id="IPR003801">
    <property type="entry name" value="GTP_cyclohydrolase_FolE2/MptA"/>
</dbReference>
<dbReference type="NCBIfam" id="NF010200">
    <property type="entry name" value="PRK13674.1-1"/>
    <property type="match status" value="1"/>
</dbReference>
<dbReference type="PANTHER" id="PTHR36445">
    <property type="entry name" value="GTP CYCLOHYDROLASE MPTA"/>
    <property type="match status" value="1"/>
</dbReference>
<dbReference type="PANTHER" id="PTHR36445:SF1">
    <property type="entry name" value="GTP CYCLOHYDROLASE MPTA"/>
    <property type="match status" value="1"/>
</dbReference>
<dbReference type="Pfam" id="PF02649">
    <property type="entry name" value="GCHY-1"/>
    <property type="match status" value="1"/>
</dbReference>
<protein>
    <recommendedName>
        <fullName evidence="1">GTP cyclohydrolase FolE2</fullName>
        <ecNumber evidence="1">3.5.4.16</ecNumber>
    </recommendedName>
</protein>
<evidence type="ECO:0000255" key="1">
    <source>
        <dbReference type="HAMAP-Rule" id="MF_01527"/>
    </source>
</evidence>
<gene>
    <name evidence="1" type="primary">folE2</name>
    <name type="ordered locus">PLES_59351</name>
</gene>
<proteinExistence type="inferred from homology"/>
<sequence length="298" mass="32416">MNALTLPDIARQTTTADLPLDWVGMQGIALPVQIGGQRVAAEADAGVSLDDPQARGIHMSRLYLALAELEQGELDLSCLRAVLQRFLDSHAGLSRRAYLRLRLAPLLRRPALVSPLSGWKRYPLVLDTRLEGDDFQAEVHLELTYSSTCPCSAALARQLIQERFDQDFAGQPLDHASVLAWLGSSAGIVATPHSQRSSAHLRIGLAEDCIGLPLEELADLGESALGTAVQTAVKRADEQAFALANGQNLMFCEDAVRRLHRALQGYPQASRFSIRVVHAESLHAHDAVAESHWQRGAA</sequence>
<feature type="chain" id="PRO_1000185155" description="GTP cyclohydrolase FolE2">
    <location>
        <begin position="1"/>
        <end position="298"/>
    </location>
</feature>
<feature type="site" description="May be catalytically important" evidence="1">
    <location>
        <position position="149"/>
    </location>
</feature>
<reference key="1">
    <citation type="journal article" date="2009" name="Genome Res.">
        <title>Newly introduced genomic prophage islands are critical determinants of in vivo competitiveness in the Liverpool epidemic strain of Pseudomonas aeruginosa.</title>
        <authorList>
            <person name="Winstanley C."/>
            <person name="Langille M.G.I."/>
            <person name="Fothergill J.L."/>
            <person name="Kukavica-Ibrulj I."/>
            <person name="Paradis-Bleau C."/>
            <person name="Sanschagrin F."/>
            <person name="Thomson N.R."/>
            <person name="Winsor G.L."/>
            <person name="Quail M.A."/>
            <person name="Lennard N."/>
            <person name="Bignell A."/>
            <person name="Clarke L."/>
            <person name="Seeger K."/>
            <person name="Saunders D."/>
            <person name="Harris D."/>
            <person name="Parkhill J."/>
            <person name="Hancock R.E.W."/>
            <person name="Brinkman F.S.L."/>
            <person name="Levesque R.C."/>
        </authorList>
    </citation>
    <scope>NUCLEOTIDE SEQUENCE [LARGE SCALE GENOMIC DNA]</scope>
    <source>
        <strain>LESB58</strain>
    </source>
</reference>
<comment type="function">
    <text evidence="1">Converts GTP to 7,8-dihydroneopterin triphosphate.</text>
</comment>
<comment type="catalytic activity">
    <reaction evidence="1">
        <text>GTP + H2O = 7,8-dihydroneopterin 3'-triphosphate + formate + H(+)</text>
        <dbReference type="Rhea" id="RHEA:17473"/>
        <dbReference type="ChEBI" id="CHEBI:15377"/>
        <dbReference type="ChEBI" id="CHEBI:15378"/>
        <dbReference type="ChEBI" id="CHEBI:15740"/>
        <dbReference type="ChEBI" id="CHEBI:37565"/>
        <dbReference type="ChEBI" id="CHEBI:58462"/>
        <dbReference type="EC" id="3.5.4.16"/>
    </reaction>
</comment>
<comment type="pathway">
    <text evidence="1">Cofactor biosynthesis; 7,8-dihydroneopterin triphosphate biosynthesis; 7,8-dihydroneopterin triphosphate from GTP: step 1/1.</text>
</comment>
<comment type="similarity">
    <text evidence="1">Belongs to the GTP cyclohydrolase IV family.</text>
</comment>
<accession>B7V776</accession>
<keyword id="KW-0378">Hydrolase</keyword>
<name>GCH4_PSEA8</name>
<organism>
    <name type="scientific">Pseudomonas aeruginosa (strain LESB58)</name>
    <dbReference type="NCBI Taxonomy" id="557722"/>
    <lineage>
        <taxon>Bacteria</taxon>
        <taxon>Pseudomonadati</taxon>
        <taxon>Pseudomonadota</taxon>
        <taxon>Gammaproteobacteria</taxon>
        <taxon>Pseudomonadales</taxon>
        <taxon>Pseudomonadaceae</taxon>
        <taxon>Pseudomonas</taxon>
    </lineage>
</organism>